<sequence length="122" mass="14467">MAPQKDKKPKKSTWRFHLDLTHPVEDGIFDSGNFEQFLREKVKVNGKTGNLGNVVHIERLKNKITVVSEKQFSKRYLKYLTKKYLKKNNLRDWLRVVASDKETYELRYFQISQDEDGSESED</sequence>
<organism>
    <name type="scientific">Mus musculus</name>
    <name type="common">Mouse</name>
    <dbReference type="NCBI Taxonomy" id="10090"/>
    <lineage>
        <taxon>Eukaryota</taxon>
        <taxon>Metazoa</taxon>
        <taxon>Chordata</taxon>
        <taxon>Craniata</taxon>
        <taxon>Vertebrata</taxon>
        <taxon>Euteleostomi</taxon>
        <taxon>Mammalia</taxon>
        <taxon>Eutheria</taxon>
        <taxon>Euarchontoglires</taxon>
        <taxon>Glires</taxon>
        <taxon>Rodentia</taxon>
        <taxon>Myomorpha</taxon>
        <taxon>Muroidea</taxon>
        <taxon>Muridae</taxon>
        <taxon>Murinae</taxon>
        <taxon>Mus</taxon>
        <taxon>Mus</taxon>
    </lineage>
</organism>
<gene>
    <name type="primary">Rpl22l1</name>
</gene>
<name>RL22L_MOUSE</name>
<proteinExistence type="evidence at protein level"/>
<accession>Q9D7S7</accession>
<accession>Q9CXU8</accession>
<protein>
    <recommendedName>
        <fullName evidence="4">Ribosomal protein eL22-like 1</fullName>
    </recommendedName>
    <alternativeName>
        <fullName>60S ribosomal protein L22-like 1</fullName>
    </alternativeName>
    <alternativeName>
        <fullName evidence="4">Large ribosomal subunit protein eL22-like 1</fullName>
    </alternativeName>
</protein>
<keyword id="KW-0025">Alternative splicing</keyword>
<keyword id="KW-0597">Phosphoprotein</keyword>
<keyword id="KW-1185">Reference proteome</keyword>
<keyword id="KW-0687">Ribonucleoprotein</keyword>
<keyword id="KW-0689">Ribosomal protein</keyword>
<evidence type="ECO:0000250" key="1">
    <source>
        <dbReference type="UniProtKB" id="Q6P5R6"/>
    </source>
</evidence>
<evidence type="ECO:0000303" key="2">
    <source>
    </source>
</evidence>
<evidence type="ECO:0000303" key="3">
    <source>
    </source>
</evidence>
<evidence type="ECO:0000305" key="4"/>
<evidence type="ECO:0007744" key="5">
    <source>
    </source>
</evidence>
<evidence type="ECO:0007744" key="6">
    <source>
    </source>
</evidence>
<evidence type="ECO:0007744" key="7">
    <source>
    </source>
</evidence>
<dbReference type="EMBL" id="AK008915">
    <property type="protein sequence ID" value="BAB25965.1"/>
    <property type="molecule type" value="mRNA"/>
</dbReference>
<dbReference type="EMBL" id="AK013966">
    <property type="protein sequence ID" value="BAB29090.1"/>
    <property type="molecule type" value="mRNA"/>
</dbReference>
<dbReference type="EMBL" id="BC026533">
    <property type="protein sequence ID" value="AAH26533.1"/>
    <property type="molecule type" value="mRNA"/>
</dbReference>
<dbReference type="CCDS" id="CCDS17278.1">
    <molecule id="Q9D7S7-1"/>
</dbReference>
<dbReference type="CCDS" id="CCDS84615.1">
    <molecule id="Q9D7S7-2"/>
</dbReference>
<dbReference type="RefSeq" id="NP_001334155.1">
    <molecule id="Q9D7S7-2"/>
    <property type="nucleotide sequence ID" value="NM_001347226.3"/>
</dbReference>
<dbReference type="RefSeq" id="NP_080793.1">
    <molecule id="Q9D7S7-1"/>
    <property type="nucleotide sequence ID" value="NM_026517.4"/>
</dbReference>
<dbReference type="SMR" id="Q9D7S7"/>
<dbReference type="BioGRID" id="212608">
    <property type="interactions" value="16"/>
</dbReference>
<dbReference type="ComplexPortal" id="CPX-5262">
    <property type="entry name" value="60S cytosolic large ribosomal subunit"/>
</dbReference>
<dbReference type="ComplexPortal" id="CPX-7662">
    <property type="entry name" value="60S cytosolic large ribosomal subunit, testis-specific variant"/>
</dbReference>
<dbReference type="ComplexPortal" id="CPX-7663">
    <property type="entry name" value="60S cytosolic large ribosomal subunit, striated muscle variant"/>
</dbReference>
<dbReference type="FunCoup" id="Q9D7S7">
    <property type="interactions" value="1259"/>
</dbReference>
<dbReference type="IntAct" id="Q9D7S7">
    <property type="interactions" value="1"/>
</dbReference>
<dbReference type="STRING" id="10090.ENSMUSP00000043111"/>
<dbReference type="iPTMnet" id="Q9D7S7"/>
<dbReference type="PhosphoSitePlus" id="Q9D7S7"/>
<dbReference type="jPOST" id="Q9D7S7"/>
<dbReference type="PaxDb" id="10090-ENSMUSP00000043111"/>
<dbReference type="ProteomicsDB" id="255158">
    <molecule id="Q9D7S7-1"/>
</dbReference>
<dbReference type="ProteomicsDB" id="255159">
    <molecule id="Q9D7S7-2"/>
</dbReference>
<dbReference type="Pumba" id="Q9D7S7"/>
<dbReference type="Antibodypedia" id="71210">
    <property type="antibodies" value="52 antibodies from 15 providers"/>
</dbReference>
<dbReference type="DNASU" id="68028"/>
<dbReference type="Ensembl" id="ENSMUST00000043867.11">
    <molecule id="Q9D7S7-1"/>
    <property type="protein sequence ID" value="ENSMUSP00000043111.6"/>
    <property type="gene ID" value="ENSMUSG00000039221.11"/>
</dbReference>
<dbReference type="Ensembl" id="ENSMUST00000194649.2">
    <molecule id="Q9D7S7-2"/>
    <property type="protein sequence ID" value="ENSMUSP00000141510.2"/>
    <property type="gene ID" value="ENSMUSG00000039221.11"/>
</dbReference>
<dbReference type="GeneID" id="68028"/>
<dbReference type="KEGG" id="mmu:68028"/>
<dbReference type="UCSC" id="uc008ouf.1">
    <molecule id="Q9D7S7-1"/>
    <property type="organism name" value="mouse"/>
</dbReference>
<dbReference type="UCSC" id="uc008oug.1">
    <molecule id="Q9D7S7-2"/>
    <property type="organism name" value="mouse"/>
</dbReference>
<dbReference type="AGR" id="MGI:1915278"/>
<dbReference type="CTD" id="200916"/>
<dbReference type="MGI" id="MGI:1915278">
    <property type="gene designation" value="Rpl22l1"/>
</dbReference>
<dbReference type="VEuPathDB" id="HostDB:ENSMUSG00000039221"/>
<dbReference type="eggNOG" id="KOG3434">
    <property type="taxonomic scope" value="Eukaryota"/>
</dbReference>
<dbReference type="GeneTree" id="ENSGT00940000154509"/>
<dbReference type="HOGENOM" id="CLU_105624_0_1_1"/>
<dbReference type="InParanoid" id="Q9D7S7"/>
<dbReference type="OMA" id="WIRFIST"/>
<dbReference type="OrthoDB" id="10259820at2759"/>
<dbReference type="PhylomeDB" id="Q9D7S7"/>
<dbReference type="TreeFam" id="TF313018"/>
<dbReference type="Reactome" id="R-MMU-156827">
    <property type="pathway name" value="L13a-mediated translational silencing of Ceruloplasmin expression"/>
</dbReference>
<dbReference type="Reactome" id="R-MMU-1799339">
    <property type="pathway name" value="SRP-dependent cotranslational protein targeting to membrane"/>
</dbReference>
<dbReference type="Reactome" id="R-MMU-6791226">
    <property type="pathway name" value="Major pathway of rRNA processing in the nucleolus and cytosol"/>
</dbReference>
<dbReference type="Reactome" id="R-MMU-72689">
    <property type="pathway name" value="Formation of a pool of free 40S subunits"/>
</dbReference>
<dbReference type="Reactome" id="R-MMU-72706">
    <property type="pathway name" value="GTP hydrolysis and joining of the 60S ribosomal subunit"/>
</dbReference>
<dbReference type="Reactome" id="R-MMU-975956">
    <property type="pathway name" value="Nonsense Mediated Decay (NMD) independent of the Exon Junction Complex (EJC)"/>
</dbReference>
<dbReference type="Reactome" id="R-MMU-975957">
    <property type="pathway name" value="Nonsense Mediated Decay (NMD) enhanced by the Exon Junction Complex (EJC)"/>
</dbReference>
<dbReference type="BioGRID-ORCS" id="68028">
    <property type="hits" value="11 hits in 75 CRISPR screens"/>
</dbReference>
<dbReference type="ChiTaRS" id="Rpl22l1">
    <property type="organism name" value="mouse"/>
</dbReference>
<dbReference type="PRO" id="PR:Q9D7S7"/>
<dbReference type="Proteomes" id="UP000000589">
    <property type="component" value="Chromosome 3"/>
</dbReference>
<dbReference type="RNAct" id="Q9D7S7">
    <property type="molecule type" value="protein"/>
</dbReference>
<dbReference type="Bgee" id="ENSMUSG00000039221">
    <property type="expression patterns" value="Expressed in mesodermal cell in embryo and 65 other cell types or tissues"/>
</dbReference>
<dbReference type="ExpressionAtlas" id="Q9D7S7">
    <property type="expression patterns" value="baseline and differential"/>
</dbReference>
<dbReference type="GO" id="GO:0005829">
    <property type="term" value="C:cytosol"/>
    <property type="evidence" value="ECO:0000304"/>
    <property type="project" value="Reactome"/>
</dbReference>
<dbReference type="GO" id="GO:1990904">
    <property type="term" value="C:ribonucleoprotein complex"/>
    <property type="evidence" value="ECO:0007669"/>
    <property type="project" value="UniProtKB-KW"/>
</dbReference>
<dbReference type="GO" id="GO:0005840">
    <property type="term" value="C:ribosome"/>
    <property type="evidence" value="ECO:0007669"/>
    <property type="project" value="UniProtKB-KW"/>
</dbReference>
<dbReference type="GO" id="GO:0003735">
    <property type="term" value="F:structural constituent of ribosome"/>
    <property type="evidence" value="ECO:0007669"/>
    <property type="project" value="InterPro"/>
</dbReference>
<dbReference type="GO" id="GO:0006412">
    <property type="term" value="P:translation"/>
    <property type="evidence" value="ECO:0007669"/>
    <property type="project" value="InterPro"/>
</dbReference>
<dbReference type="FunFam" id="3.30.1360.210:FF:000001">
    <property type="entry name" value="60S ribosomal protein L22 1"/>
    <property type="match status" value="1"/>
</dbReference>
<dbReference type="Gene3D" id="3.30.1360.210">
    <property type="match status" value="1"/>
</dbReference>
<dbReference type="InterPro" id="IPR002671">
    <property type="entry name" value="Ribosomal_eL22"/>
</dbReference>
<dbReference type="InterPro" id="IPR038526">
    <property type="entry name" value="Ribosomal_eL22_sf"/>
</dbReference>
<dbReference type="PANTHER" id="PTHR10064">
    <property type="entry name" value="60S RIBOSOMAL PROTEIN L22"/>
    <property type="match status" value="1"/>
</dbReference>
<dbReference type="PANTHER" id="PTHR10064:SF1">
    <property type="entry name" value="RIBOSOMAL PROTEIN EL22-LIKE"/>
    <property type="match status" value="1"/>
</dbReference>
<dbReference type="Pfam" id="PF01776">
    <property type="entry name" value="Ribosomal_L22e"/>
    <property type="match status" value="1"/>
</dbReference>
<reference key="1">
    <citation type="journal article" date="2005" name="Science">
        <title>The transcriptional landscape of the mammalian genome.</title>
        <authorList>
            <person name="Carninci P."/>
            <person name="Kasukawa T."/>
            <person name="Katayama S."/>
            <person name="Gough J."/>
            <person name="Frith M.C."/>
            <person name="Maeda N."/>
            <person name="Oyama R."/>
            <person name="Ravasi T."/>
            <person name="Lenhard B."/>
            <person name="Wells C."/>
            <person name="Kodzius R."/>
            <person name="Shimokawa K."/>
            <person name="Bajic V.B."/>
            <person name="Brenner S.E."/>
            <person name="Batalov S."/>
            <person name="Forrest A.R."/>
            <person name="Zavolan M."/>
            <person name="Davis M.J."/>
            <person name="Wilming L.G."/>
            <person name="Aidinis V."/>
            <person name="Allen J.E."/>
            <person name="Ambesi-Impiombato A."/>
            <person name="Apweiler R."/>
            <person name="Aturaliya R.N."/>
            <person name="Bailey T.L."/>
            <person name="Bansal M."/>
            <person name="Baxter L."/>
            <person name="Beisel K.W."/>
            <person name="Bersano T."/>
            <person name="Bono H."/>
            <person name="Chalk A.M."/>
            <person name="Chiu K.P."/>
            <person name="Choudhary V."/>
            <person name="Christoffels A."/>
            <person name="Clutterbuck D.R."/>
            <person name="Crowe M.L."/>
            <person name="Dalla E."/>
            <person name="Dalrymple B.P."/>
            <person name="de Bono B."/>
            <person name="Della Gatta G."/>
            <person name="di Bernardo D."/>
            <person name="Down T."/>
            <person name="Engstrom P."/>
            <person name="Fagiolini M."/>
            <person name="Faulkner G."/>
            <person name="Fletcher C.F."/>
            <person name="Fukushima T."/>
            <person name="Furuno M."/>
            <person name="Futaki S."/>
            <person name="Gariboldi M."/>
            <person name="Georgii-Hemming P."/>
            <person name="Gingeras T.R."/>
            <person name="Gojobori T."/>
            <person name="Green R.E."/>
            <person name="Gustincich S."/>
            <person name="Harbers M."/>
            <person name="Hayashi Y."/>
            <person name="Hensch T.K."/>
            <person name="Hirokawa N."/>
            <person name="Hill D."/>
            <person name="Huminiecki L."/>
            <person name="Iacono M."/>
            <person name="Ikeo K."/>
            <person name="Iwama A."/>
            <person name="Ishikawa T."/>
            <person name="Jakt M."/>
            <person name="Kanapin A."/>
            <person name="Katoh M."/>
            <person name="Kawasawa Y."/>
            <person name="Kelso J."/>
            <person name="Kitamura H."/>
            <person name="Kitano H."/>
            <person name="Kollias G."/>
            <person name="Krishnan S.P."/>
            <person name="Kruger A."/>
            <person name="Kummerfeld S.K."/>
            <person name="Kurochkin I.V."/>
            <person name="Lareau L.F."/>
            <person name="Lazarevic D."/>
            <person name="Lipovich L."/>
            <person name="Liu J."/>
            <person name="Liuni S."/>
            <person name="McWilliam S."/>
            <person name="Madan Babu M."/>
            <person name="Madera M."/>
            <person name="Marchionni L."/>
            <person name="Matsuda H."/>
            <person name="Matsuzawa S."/>
            <person name="Miki H."/>
            <person name="Mignone F."/>
            <person name="Miyake S."/>
            <person name="Morris K."/>
            <person name="Mottagui-Tabar S."/>
            <person name="Mulder N."/>
            <person name="Nakano N."/>
            <person name="Nakauchi H."/>
            <person name="Ng P."/>
            <person name="Nilsson R."/>
            <person name="Nishiguchi S."/>
            <person name="Nishikawa S."/>
            <person name="Nori F."/>
            <person name="Ohara O."/>
            <person name="Okazaki Y."/>
            <person name="Orlando V."/>
            <person name="Pang K.C."/>
            <person name="Pavan W.J."/>
            <person name="Pavesi G."/>
            <person name="Pesole G."/>
            <person name="Petrovsky N."/>
            <person name="Piazza S."/>
            <person name="Reed J."/>
            <person name="Reid J.F."/>
            <person name="Ring B.Z."/>
            <person name="Ringwald M."/>
            <person name="Rost B."/>
            <person name="Ruan Y."/>
            <person name="Salzberg S.L."/>
            <person name="Sandelin A."/>
            <person name="Schneider C."/>
            <person name="Schoenbach C."/>
            <person name="Sekiguchi K."/>
            <person name="Semple C.A."/>
            <person name="Seno S."/>
            <person name="Sessa L."/>
            <person name="Sheng Y."/>
            <person name="Shibata Y."/>
            <person name="Shimada H."/>
            <person name="Shimada K."/>
            <person name="Silva D."/>
            <person name="Sinclair B."/>
            <person name="Sperling S."/>
            <person name="Stupka E."/>
            <person name="Sugiura K."/>
            <person name="Sultana R."/>
            <person name="Takenaka Y."/>
            <person name="Taki K."/>
            <person name="Tammoja K."/>
            <person name="Tan S.L."/>
            <person name="Tang S."/>
            <person name="Taylor M.S."/>
            <person name="Tegner J."/>
            <person name="Teichmann S.A."/>
            <person name="Ueda H.R."/>
            <person name="van Nimwegen E."/>
            <person name="Verardo R."/>
            <person name="Wei C.L."/>
            <person name="Yagi K."/>
            <person name="Yamanishi H."/>
            <person name="Zabarovsky E."/>
            <person name="Zhu S."/>
            <person name="Zimmer A."/>
            <person name="Hide W."/>
            <person name="Bult C."/>
            <person name="Grimmond S.M."/>
            <person name="Teasdale R.D."/>
            <person name="Liu E.T."/>
            <person name="Brusic V."/>
            <person name="Quackenbush J."/>
            <person name="Wahlestedt C."/>
            <person name="Mattick J.S."/>
            <person name="Hume D.A."/>
            <person name="Kai C."/>
            <person name="Sasaki D."/>
            <person name="Tomaru Y."/>
            <person name="Fukuda S."/>
            <person name="Kanamori-Katayama M."/>
            <person name="Suzuki M."/>
            <person name="Aoki J."/>
            <person name="Arakawa T."/>
            <person name="Iida J."/>
            <person name="Imamura K."/>
            <person name="Itoh M."/>
            <person name="Kato T."/>
            <person name="Kawaji H."/>
            <person name="Kawagashira N."/>
            <person name="Kawashima T."/>
            <person name="Kojima M."/>
            <person name="Kondo S."/>
            <person name="Konno H."/>
            <person name="Nakano K."/>
            <person name="Ninomiya N."/>
            <person name="Nishio T."/>
            <person name="Okada M."/>
            <person name="Plessy C."/>
            <person name="Shibata K."/>
            <person name="Shiraki T."/>
            <person name="Suzuki S."/>
            <person name="Tagami M."/>
            <person name="Waki K."/>
            <person name="Watahiki A."/>
            <person name="Okamura-Oho Y."/>
            <person name="Suzuki H."/>
            <person name="Kawai J."/>
            <person name="Hayashizaki Y."/>
        </authorList>
    </citation>
    <scope>NUCLEOTIDE SEQUENCE [LARGE SCALE MRNA] (ISOFORMS 1 AND 2)</scope>
    <source>
        <strain>C57BL/6J</strain>
        <tissue>Head</tissue>
        <tissue>Stomach</tissue>
    </source>
</reference>
<reference key="2">
    <citation type="journal article" date="2004" name="Genome Res.">
        <title>The status, quality, and expansion of the NIH full-length cDNA project: the Mammalian Gene Collection (MGC).</title>
        <authorList>
            <consortium name="The MGC Project Team"/>
        </authorList>
    </citation>
    <scope>NUCLEOTIDE SEQUENCE [LARGE SCALE MRNA] (ISOFORM 2)</scope>
    <source>
        <strain>FVB/N</strain>
        <tissue>Mammary tumor</tissue>
    </source>
</reference>
<reference key="3">
    <citation type="journal article" date="2004" name="Mol. Cell. Proteomics">
        <title>Phosphoproteomic analysis of the developing mouse brain.</title>
        <authorList>
            <person name="Ballif B.A."/>
            <person name="Villen J."/>
            <person name="Beausoleil S.A."/>
            <person name="Schwartz D."/>
            <person name="Gygi S.P."/>
        </authorList>
    </citation>
    <scope>IDENTIFICATION BY MASS SPECTROMETRY [LARGE SCALE ANALYSIS]</scope>
    <source>
        <tissue>Embryonic brain</tissue>
    </source>
</reference>
<reference key="4">
    <citation type="journal article" date="2007" name="Proc. Natl. Acad. Sci. U.S.A.">
        <title>Large-scale phosphorylation analysis of mouse liver.</title>
        <authorList>
            <person name="Villen J."/>
            <person name="Beausoleil S.A."/>
            <person name="Gerber S.A."/>
            <person name="Gygi S.P."/>
        </authorList>
    </citation>
    <scope>PHOSPHORYLATION [LARGE SCALE ANALYSIS] AT SER-118 AND SER-120</scope>
    <scope>IDENTIFICATION BY MASS SPECTROMETRY [LARGE SCALE ANALYSIS]</scope>
    <source>
        <tissue>Liver</tissue>
    </source>
</reference>
<reference key="5">
    <citation type="journal article" date="2009" name="Immunity">
        <title>The phagosomal proteome in interferon-gamma-activated macrophages.</title>
        <authorList>
            <person name="Trost M."/>
            <person name="English L."/>
            <person name="Lemieux S."/>
            <person name="Courcelles M."/>
            <person name="Desjardins M."/>
            <person name="Thibault P."/>
        </authorList>
    </citation>
    <scope>PHOSPHORYLATION [LARGE SCALE ANALYSIS] AT SER-118 AND SER-120</scope>
    <scope>IDENTIFICATION BY MASS SPECTROMETRY [LARGE SCALE ANALYSIS]</scope>
</reference>
<reference key="6">
    <citation type="journal article" date="2010" name="Cell">
        <title>A tissue-specific atlas of mouse protein phosphorylation and expression.</title>
        <authorList>
            <person name="Huttlin E.L."/>
            <person name="Jedrychowski M.P."/>
            <person name="Elias J.E."/>
            <person name="Goswami T."/>
            <person name="Rad R."/>
            <person name="Beausoleil S.A."/>
            <person name="Villen J."/>
            <person name="Haas W."/>
            <person name="Sowa M.E."/>
            <person name="Gygi S.P."/>
        </authorList>
    </citation>
    <scope>PHOSPHORYLATION [LARGE SCALE ANALYSIS] AT SER-118 AND SER-120</scope>
    <scope>IDENTIFICATION BY MASS SPECTROMETRY [LARGE SCALE ANALYSIS]</scope>
    <source>
        <tissue>Brain</tissue>
        <tissue>Heart</tissue>
        <tissue>Kidney</tissue>
        <tissue>Liver</tissue>
        <tissue>Lung</tissue>
        <tissue>Pancreas</tissue>
        <tissue>Spleen</tissue>
    </source>
</reference>
<feature type="chain" id="PRO_0000240633" description="Ribosomal protein eL22-like 1">
    <location>
        <begin position="1"/>
        <end position="122"/>
    </location>
</feature>
<feature type="modified residue" description="Phosphoserine" evidence="1">
    <location>
        <position position="112"/>
    </location>
</feature>
<feature type="modified residue" description="Phosphoserine" evidence="5 6 7">
    <location>
        <position position="118"/>
    </location>
</feature>
<feature type="modified residue" description="Phosphoserine" evidence="5 6 7">
    <location>
        <position position="120"/>
    </location>
</feature>
<feature type="splice variant" id="VSP_019380" description="In isoform 2." evidence="2 3">
    <location>
        <position position="4"/>
    </location>
</feature>
<comment type="alternative products">
    <event type="alternative splicing"/>
    <isoform>
        <id>Q9D7S7-1</id>
        <name>1</name>
        <sequence type="displayed"/>
    </isoform>
    <isoform>
        <id>Q9D7S7-2</id>
        <name>2</name>
        <sequence type="described" ref="VSP_019380"/>
    </isoform>
</comment>
<comment type="similarity">
    <text evidence="4">Belongs to the eukaryotic ribosomal protein eL22 family.</text>
</comment>